<reference key="1">
    <citation type="journal article" date="2001" name="J. Bacteriol.">
        <title>Genome sequence and comparative analysis of the solvent-producing bacterium Clostridium acetobutylicum.</title>
        <authorList>
            <person name="Noelling J."/>
            <person name="Breton G."/>
            <person name="Omelchenko M.V."/>
            <person name="Makarova K.S."/>
            <person name="Zeng Q."/>
            <person name="Gibson R."/>
            <person name="Lee H.M."/>
            <person name="Dubois J."/>
            <person name="Qiu D."/>
            <person name="Hitti J."/>
            <person name="Wolf Y.I."/>
            <person name="Tatusov R.L."/>
            <person name="Sabathe F."/>
            <person name="Doucette-Stamm L.A."/>
            <person name="Soucaille P."/>
            <person name="Daly M.J."/>
            <person name="Bennett G.N."/>
            <person name="Koonin E.V."/>
            <person name="Smith D.R."/>
        </authorList>
    </citation>
    <scope>NUCLEOTIDE SEQUENCE [LARGE SCALE GENOMIC DNA]</scope>
    <source>
        <strain>ATCC 824 / DSM 792 / JCM 1419 / IAM 19013 / LMG 5710 / NBRC 13948 / NRRL B-527 / VKM B-1787 / 2291 / W</strain>
    </source>
</reference>
<accession>Q97E99</accession>
<evidence type="ECO:0000255" key="1">
    <source>
        <dbReference type="HAMAP-Rule" id="MF_01145"/>
    </source>
</evidence>
<evidence type="ECO:0000305" key="2"/>
<organism>
    <name type="scientific">Clostridium acetobutylicum (strain ATCC 824 / DSM 792 / JCM 1419 / IAM 19013 / LMG 5710 / NBRC 13948 / NRRL B-527 / VKM B-1787 / 2291 / W)</name>
    <dbReference type="NCBI Taxonomy" id="272562"/>
    <lineage>
        <taxon>Bacteria</taxon>
        <taxon>Bacillati</taxon>
        <taxon>Bacillota</taxon>
        <taxon>Clostridia</taxon>
        <taxon>Eubacteriales</taxon>
        <taxon>Clostridiaceae</taxon>
        <taxon>Clostridium</taxon>
    </lineage>
</organism>
<name>PRSA_CLOAB</name>
<gene>
    <name evidence="1" type="primary">prsA</name>
    <name type="ordered locus">CA_C3215</name>
</gene>
<sequence>MKSAKQIATALLVGMFTFSAVGCSMVEKRPEAINSKVVATIYGNQTITRGEIDKLAKGTVEQLKSQYGDSYEKNEEAVAALKKQKEQILTSLIDQKIFLKKAKDQKITLTKDEIKTNVDDVYAQYQQEFKTESEFKSQLSQYGYTVAEFKDQLKNRAISNKLIQQVVKDVKVSDDEAKKYYDSHKNSYTQSPNTVHLAHILVKTEKEAKAVKARIDKGEDFATVAKQVSTDGSKEKGGDLGDIQENDSNYDKTFMAAALKLNDNQVSAPVHTQFGWHVIKCIKKTEYPVKDFNSVKDDIKQTVLSTKQKSVYQKTLKKWESQANIDKNEKNLM</sequence>
<keyword id="KW-1003">Cell membrane</keyword>
<keyword id="KW-0413">Isomerase</keyword>
<keyword id="KW-0449">Lipoprotein</keyword>
<keyword id="KW-0472">Membrane</keyword>
<keyword id="KW-0564">Palmitate</keyword>
<keyword id="KW-1185">Reference proteome</keyword>
<keyword id="KW-0697">Rotamase</keyword>
<keyword id="KW-0732">Signal</keyword>
<proteinExistence type="inferred from homology"/>
<dbReference type="EC" id="5.2.1.8" evidence="1"/>
<dbReference type="EMBL" id="AE001437">
    <property type="protein sequence ID" value="AAK81151.1"/>
    <property type="status" value="ALT_INIT"/>
    <property type="molecule type" value="Genomic_DNA"/>
</dbReference>
<dbReference type="PIR" id="D97295">
    <property type="entry name" value="D97295"/>
</dbReference>
<dbReference type="RefSeq" id="NP_349811.1">
    <property type="nucleotide sequence ID" value="NC_003030.1"/>
</dbReference>
<dbReference type="SMR" id="Q97E99"/>
<dbReference type="STRING" id="272562.CA_C3215"/>
<dbReference type="KEGG" id="cac:CA_C3215"/>
<dbReference type="PATRIC" id="fig|272562.8.peg.3394"/>
<dbReference type="eggNOG" id="COG0760">
    <property type="taxonomic scope" value="Bacteria"/>
</dbReference>
<dbReference type="HOGENOM" id="CLU_034646_5_2_9"/>
<dbReference type="OrthoDB" id="14196at2"/>
<dbReference type="Proteomes" id="UP000000814">
    <property type="component" value="Chromosome"/>
</dbReference>
<dbReference type="GO" id="GO:0005886">
    <property type="term" value="C:plasma membrane"/>
    <property type="evidence" value="ECO:0007669"/>
    <property type="project" value="UniProtKB-SubCell"/>
</dbReference>
<dbReference type="GO" id="GO:0003755">
    <property type="term" value="F:peptidyl-prolyl cis-trans isomerase activity"/>
    <property type="evidence" value="ECO:0007669"/>
    <property type="project" value="UniProtKB-UniRule"/>
</dbReference>
<dbReference type="GO" id="GO:0006457">
    <property type="term" value="P:protein folding"/>
    <property type="evidence" value="ECO:0007669"/>
    <property type="project" value="UniProtKB-UniRule"/>
</dbReference>
<dbReference type="Gene3D" id="3.10.50.40">
    <property type="match status" value="1"/>
</dbReference>
<dbReference type="Gene3D" id="1.10.4030.10">
    <property type="entry name" value="Porin chaperone SurA, peptide-binding domain"/>
    <property type="match status" value="1"/>
</dbReference>
<dbReference type="HAMAP" id="MF_01145">
    <property type="entry name" value="Foldase_PrsA"/>
    <property type="match status" value="1"/>
</dbReference>
<dbReference type="InterPro" id="IPR023059">
    <property type="entry name" value="Foldase_PrsA"/>
</dbReference>
<dbReference type="InterPro" id="IPR046357">
    <property type="entry name" value="PPIase_dom_sf"/>
</dbReference>
<dbReference type="InterPro" id="IPR000297">
    <property type="entry name" value="PPIase_PpiC"/>
</dbReference>
<dbReference type="InterPro" id="IPR023058">
    <property type="entry name" value="PPIase_PpiC_CS"/>
</dbReference>
<dbReference type="InterPro" id="IPR050245">
    <property type="entry name" value="PrsA_foldase"/>
</dbReference>
<dbReference type="InterPro" id="IPR027304">
    <property type="entry name" value="Trigger_fact/SurA_dom_sf"/>
</dbReference>
<dbReference type="NCBIfam" id="NF000809">
    <property type="entry name" value="PRK00059.1"/>
    <property type="match status" value="1"/>
</dbReference>
<dbReference type="PANTHER" id="PTHR47245:SF1">
    <property type="entry name" value="FOLDASE PROTEIN PRSA"/>
    <property type="match status" value="1"/>
</dbReference>
<dbReference type="PANTHER" id="PTHR47245">
    <property type="entry name" value="PEPTIDYLPROLYL ISOMERASE"/>
    <property type="match status" value="1"/>
</dbReference>
<dbReference type="Pfam" id="PF13145">
    <property type="entry name" value="Rotamase_2"/>
    <property type="match status" value="1"/>
</dbReference>
<dbReference type="Pfam" id="PF13624">
    <property type="entry name" value="SurA_N_3"/>
    <property type="match status" value="1"/>
</dbReference>
<dbReference type="SUPFAM" id="SSF54534">
    <property type="entry name" value="FKBP-like"/>
    <property type="match status" value="1"/>
</dbReference>
<dbReference type="SUPFAM" id="SSF109998">
    <property type="entry name" value="Triger factor/SurA peptide-binding domain-like"/>
    <property type="match status" value="1"/>
</dbReference>
<dbReference type="PROSITE" id="PS01096">
    <property type="entry name" value="PPIC_PPIASE_1"/>
    <property type="match status" value="1"/>
</dbReference>
<dbReference type="PROSITE" id="PS50198">
    <property type="entry name" value="PPIC_PPIASE_2"/>
    <property type="match status" value="1"/>
</dbReference>
<dbReference type="PROSITE" id="PS51257">
    <property type="entry name" value="PROKAR_LIPOPROTEIN"/>
    <property type="match status" value="1"/>
</dbReference>
<comment type="function">
    <text evidence="1">Plays a major role in protein secretion by helping the post-translocational extracellular folding of several secreted proteins.</text>
</comment>
<comment type="catalytic activity">
    <reaction evidence="1">
        <text>[protein]-peptidylproline (omega=180) = [protein]-peptidylproline (omega=0)</text>
        <dbReference type="Rhea" id="RHEA:16237"/>
        <dbReference type="Rhea" id="RHEA-COMP:10747"/>
        <dbReference type="Rhea" id="RHEA-COMP:10748"/>
        <dbReference type="ChEBI" id="CHEBI:83833"/>
        <dbReference type="ChEBI" id="CHEBI:83834"/>
        <dbReference type="EC" id="5.2.1.8"/>
    </reaction>
</comment>
<comment type="subcellular location">
    <subcellularLocation>
        <location evidence="1">Cell membrane</location>
        <topology evidence="1">Lipid-anchor</topology>
    </subcellularLocation>
</comment>
<comment type="similarity">
    <text evidence="1">Belongs to the PrsA family.</text>
</comment>
<comment type="sequence caution" evidence="2">
    <conflict type="erroneous initiation">
        <sequence resource="EMBL-CDS" id="AAK81151"/>
    </conflict>
</comment>
<feature type="signal peptide" evidence="1">
    <location>
        <begin position="1"/>
        <end position="22"/>
    </location>
</feature>
<feature type="chain" id="PRO_0000029300" description="Foldase protein PrsA">
    <location>
        <begin position="23"/>
        <end position="333"/>
    </location>
</feature>
<feature type="domain" description="PpiC" evidence="1">
    <location>
        <begin position="192"/>
        <end position="283"/>
    </location>
</feature>
<feature type="lipid moiety-binding region" description="N-palmitoyl cysteine" evidence="1">
    <location>
        <position position="23"/>
    </location>
</feature>
<feature type="lipid moiety-binding region" description="S-diacylglycerol cysteine" evidence="1">
    <location>
        <position position="23"/>
    </location>
</feature>
<protein>
    <recommendedName>
        <fullName evidence="1">Foldase protein PrsA</fullName>
        <ecNumber evidence="1">5.2.1.8</ecNumber>
    </recommendedName>
</protein>